<name>FABZ1_LACLA</name>
<keyword id="KW-0963">Cytoplasm</keyword>
<keyword id="KW-0441">Lipid A biosynthesis</keyword>
<keyword id="KW-0444">Lipid biosynthesis</keyword>
<keyword id="KW-0443">Lipid metabolism</keyword>
<keyword id="KW-0456">Lyase</keyword>
<keyword id="KW-1185">Reference proteome</keyword>
<sequence length="151" mass="16796">MTKKYAMTATEVMEVIPNRYPIMFIDYVDEISENKIVATKNVTINEEVFNGHFPGNPTFPGVLILESLAQAGSILILKKEEFQGKMAYIGGIDKAKFRQKVTPGDVMKLEFEITKFRGKVGTADAAAYVDGKKVTTCQFTFIVDEAAEQTN</sequence>
<reference key="1">
    <citation type="journal article" date="2001" name="Genome Res.">
        <title>The complete genome sequence of the lactic acid bacterium Lactococcus lactis ssp. lactis IL1403.</title>
        <authorList>
            <person name="Bolotin A."/>
            <person name="Wincker P."/>
            <person name="Mauger S."/>
            <person name="Jaillon O."/>
            <person name="Malarme K."/>
            <person name="Weissenbach J."/>
            <person name="Ehrlich S.D."/>
            <person name="Sorokin A."/>
        </authorList>
    </citation>
    <scope>NUCLEOTIDE SEQUENCE [LARGE SCALE GENOMIC DNA]</scope>
    <source>
        <strain>IL1403</strain>
    </source>
</reference>
<evidence type="ECO:0000250" key="1"/>
<evidence type="ECO:0000305" key="2"/>
<organism>
    <name type="scientific">Lactococcus lactis subsp. lactis (strain IL1403)</name>
    <name type="common">Streptococcus lactis</name>
    <dbReference type="NCBI Taxonomy" id="272623"/>
    <lineage>
        <taxon>Bacteria</taxon>
        <taxon>Bacillati</taxon>
        <taxon>Bacillota</taxon>
        <taxon>Bacilli</taxon>
        <taxon>Lactobacillales</taxon>
        <taxon>Streptococcaceae</taxon>
        <taxon>Lactococcus</taxon>
    </lineage>
</organism>
<accession>Q9CI03</accession>
<proteinExistence type="inferred from homology"/>
<comment type="function">
    <text evidence="1">Involved in unsaturated fatty acids biosynthesis. Catalyzes the dehydration of short chain beta-hydroxyacyl-ACPs and long chain saturated and unsaturated beta-hydroxyacyl-ACPs (By similarity).</text>
</comment>
<comment type="catalytic activity">
    <reaction>
        <text>a (3R)-hydroxyacyl-[ACP] = a (2E)-enoyl-[ACP] + H2O</text>
        <dbReference type="Rhea" id="RHEA:13097"/>
        <dbReference type="Rhea" id="RHEA-COMP:9925"/>
        <dbReference type="Rhea" id="RHEA-COMP:9945"/>
        <dbReference type="ChEBI" id="CHEBI:15377"/>
        <dbReference type="ChEBI" id="CHEBI:78784"/>
        <dbReference type="ChEBI" id="CHEBI:78827"/>
        <dbReference type="EC" id="4.2.1.59"/>
    </reaction>
</comment>
<comment type="subcellular location">
    <subcellularLocation>
        <location evidence="1">Cytoplasm</location>
    </subcellularLocation>
</comment>
<comment type="similarity">
    <text evidence="2">Belongs to the thioester dehydratase family. FabZ subfamily.</text>
</comment>
<dbReference type="EC" id="4.2.1.59"/>
<dbReference type="EMBL" id="AE005176">
    <property type="protein sequence ID" value="AAK04663.1"/>
    <property type="molecule type" value="Genomic_DNA"/>
</dbReference>
<dbReference type="PIR" id="E86695">
    <property type="entry name" value="E86695"/>
</dbReference>
<dbReference type="RefSeq" id="NP_266721.1">
    <property type="nucleotide sequence ID" value="NC_002662.1"/>
</dbReference>
<dbReference type="SMR" id="Q9CI03"/>
<dbReference type="PaxDb" id="272623-L160425"/>
<dbReference type="EnsemblBacteria" id="AAK04663">
    <property type="protein sequence ID" value="AAK04663"/>
    <property type="gene ID" value="L160425"/>
</dbReference>
<dbReference type="KEGG" id="lla:L160425"/>
<dbReference type="PATRIC" id="fig|272623.7.peg.603"/>
<dbReference type="eggNOG" id="COG0764">
    <property type="taxonomic scope" value="Bacteria"/>
</dbReference>
<dbReference type="HOGENOM" id="CLU_078912_3_0_9"/>
<dbReference type="OrthoDB" id="9772788at2"/>
<dbReference type="Proteomes" id="UP000002196">
    <property type="component" value="Chromosome"/>
</dbReference>
<dbReference type="GO" id="GO:0005737">
    <property type="term" value="C:cytoplasm"/>
    <property type="evidence" value="ECO:0007669"/>
    <property type="project" value="UniProtKB-SubCell"/>
</dbReference>
<dbReference type="GO" id="GO:0016020">
    <property type="term" value="C:membrane"/>
    <property type="evidence" value="ECO:0007669"/>
    <property type="project" value="GOC"/>
</dbReference>
<dbReference type="GO" id="GO:0019171">
    <property type="term" value="F:(3R)-hydroxyacyl-[acyl-carrier-protein] dehydratase activity"/>
    <property type="evidence" value="ECO:0007669"/>
    <property type="project" value="UniProtKB-EC"/>
</dbReference>
<dbReference type="GO" id="GO:0006633">
    <property type="term" value="P:fatty acid biosynthetic process"/>
    <property type="evidence" value="ECO:0007669"/>
    <property type="project" value="UniProtKB-UniRule"/>
</dbReference>
<dbReference type="GO" id="GO:0009245">
    <property type="term" value="P:lipid A biosynthetic process"/>
    <property type="evidence" value="ECO:0007669"/>
    <property type="project" value="UniProtKB-UniRule"/>
</dbReference>
<dbReference type="CDD" id="cd01288">
    <property type="entry name" value="FabZ"/>
    <property type="match status" value="1"/>
</dbReference>
<dbReference type="FunFam" id="3.10.129.10:FF:000001">
    <property type="entry name" value="3-hydroxyacyl-[acyl-carrier-protein] dehydratase FabZ"/>
    <property type="match status" value="1"/>
</dbReference>
<dbReference type="Gene3D" id="3.10.129.10">
    <property type="entry name" value="Hotdog Thioesterase"/>
    <property type="match status" value="1"/>
</dbReference>
<dbReference type="HAMAP" id="MF_00406">
    <property type="entry name" value="FabZ"/>
    <property type="match status" value="1"/>
</dbReference>
<dbReference type="InterPro" id="IPR013114">
    <property type="entry name" value="FabA_FabZ"/>
</dbReference>
<dbReference type="InterPro" id="IPR010084">
    <property type="entry name" value="FabZ"/>
</dbReference>
<dbReference type="InterPro" id="IPR029069">
    <property type="entry name" value="HotDog_dom_sf"/>
</dbReference>
<dbReference type="NCBIfam" id="TIGR01750">
    <property type="entry name" value="fabZ"/>
    <property type="match status" value="1"/>
</dbReference>
<dbReference type="NCBIfam" id="NF000582">
    <property type="entry name" value="PRK00006.1"/>
    <property type="match status" value="1"/>
</dbReference>
<dbReference type="PANTHER" id="PTHR30272">
    <property type="entry name" value="3-HYDROXYACYL-[ACYL-CARRIER-PROTEIN] DEHYDRATASE"/>
    <property type="match status" value="1"/>
</dbReference>
<dbReference type="PANTHER" id="PTHR30272:SF1">
    <property type="entry name" value="3-HYDROXYACYL-[ACYL-CARRIER-PROTEIN] DEHYDRATASE"/>
    <property type="match status" value="1"/>
</dbReference>
<dbReference type="Pfam" id="PF07977">
    <property type="entry name" value="FabA"/>
    <property type="match status" value="1"/>
</dbReference>
<dbReference type="SUPFAM" id="SSF54637">
    <property type="entry name" value="Thioesterase/thiol ester dehydrase-isomerase"/>
    <property type="match status" value="1"/>
</dbReference>
<feature type="chain" id="PRO_0000091691" description="3-hydroxyacyl-[acyl-carrier-protein] dehydratase FabZ">
    <location>
        <begin position="1"/>
        <end position="151"/>
    </location>
</feature>
<feature type="active site" evidence="1">
    <location>
        <position position="52"/>
    </location>
</feature>
<gene>
    <name type="primary">fabZ1</name>
    <name type="ordered locus">LL0565</name>
    <name type="ORF">L160425</name>
</gene>
<protein>
    <recommendedName>
        <fullName>3-hydroxyacyl-[acyl-carrier-protein] dehydratase FabZ</fullName>
        <ecNumber>4.2.1.59</ecNumber>
    </recommendedName>
    <alternativeName>
        <fullName>(3R)-hydroxymyristoyl-[acyl-carrier-protein] dehydratase</fullName>
        <shortName>(3R)-hydroxymyristoyl-ACP dehydrase</shortName>
    </alternativeName>
    <alternativeName>
        <fullName>Beta-hydroxyacyl-ACP dehydratase</fullName>
    </alternativeName>
</protein>